<accession>Q87DK8</accession>
<keyword id="KW-0997">Cell inner membrane</keyword>
<keyword id="KW-1003">Cell membrane</keyword>
<keyword id="KW-0407">Ion channel</keyword>
<keyword id="KW-0406">Ion transport</keyword>
<keyword id="KW-0472">Membrane</keyword>
<keyword id="KW-0479">Metal-binding</keyword>
<keyword id="KW-1185">Reference proteome</keyword>
<keyword id="KW-0915">Sodium</keyword>
<keyword id="KW-0812">Transmembrane</keyword>
<keyword id="KW-1133">Transmembrane helix</keyword>
<keyword id="KW-0813">Transport</keyword>
<proteinExistence type="inferred from homology"/>
<feature type="chain" id="PRO_0000110214" description="Fluoride-specific ion channel FluC">
    <location>
        <begin position="1"/>
        <end position="133"/>
    </location>
</feature>
<feature type="transmembrane region" description="Helical" evidence="1">
    <location>
        <begin position="3"/>
        <end position="23"/>
    </location>
</feature>
<feature type="transmembrane region" description="Helical" evidence="1">
    <location>
        <begin position="41"/>
        <end position="61"/>
    </location>
</feature>
<feature type="transmembrane region" description="Helical" evidence="1">
    <location>
        <begin position="76"/>
        <end position="96"/>
    </location>
</feature>
<feature type="transmembrane region" description="Helical" evidence="1">
    <location>
        <begin position="103"/>
        <end position="123"/>
    </location>
</feature>
<feature type="binding site" evidence="1">
    <location>
        <position position="81"/>
    </location>
    <ligand>
        <name>Na(+)</name>
        <dbReference type="ChEBI" id="CHEBI:29101"/>
        <note>structural</note>
    </ligand>
</feature>
<feature type="binding site" evidence="1">
    <location>
        <position position="84"/>
    </location>
    <ligand>
        <name>Na(+)</name>
        <dbReference type="ChEBI" id="CHEBI:29101"/>
        <note>structural</note>
    </ligand>
</feature>
<dbReference type="EMBL" id="AE009442">
    <property type="protein sequence ID" value="AAO28545.1"/>
    <property type="molecule type" value="Genomic_DNA"/>
</dbReference>
<dbReference type="RefSeq" id="WP_004089119.1">
    <property type="nucleotide sequence ID" value="NC_004556.1"/>
</dbReference>
<dbReference type="SMR" id="Q87DK8"/>
<dbReference type="GeneID" id="93904452"/>
<dbReference type="KEGG" id="xft:PD_0674"/>
<dbReference type="HOGENOM" id="CLU_114342_2_3_6"/>
<dbReference type="Proteomes" id="UP000002516">
    <property type="component" value="Chromosome"/>
</dbReference>
<dbReference type="GO" id="GO:0005886">
    <property type="term" value="C:plasma membrane"/>
    <property type="evidence" value="ECO:0007669"/>
    <property type="project" value="UniProtKB-SubCell"/>
</dbReference>
<dbReference type="GO" id="GO:0062054">
    <property type="term" value="F:fluoride channel activity"/>
    <property type="evidence" value="ECO:0007669"/>
    <property type="project" value="UniProtKB-UniRule"/>
</dbReference>
<dbReference type="GO" id="GO:0046872">
    <property type="term" value="F:metal ion binding"/>
    <property type="evidence" value="ECO:0007669"/>
    <property type="project" value="UniProtKB-KW"/>
</dbReference>
<dbReference type="GO" id="GO:0140114">
    <property type="term" value="P:cellular detoxification of fluoride"/>
    <property type="evidence" value="ECO:0007669"/>
    <property type="project" value="UniProtKB-UniRule"/>
</dbReference>
<dbReference type="HAMAP" id="MF_00454">
    <property type="entry name" value="FluC"/>
    <property type="match status" value="1"/>
</dbReference>
<dbReference type="InterPro" id="IPR003691">
    <property type="entry name" value="FluC"/>
</dbReference>
<dbReference type="NCBIfam" id="NF010814">
    <property type="entry name" value="PRK14218.1"/>
    <property type="match status" value="1"/>
</dbReference>
<dbReference type="PANTHER" id="PTHR28259">
    <property type="entry name" value="FLUORIDE EXPORT PROTEIN 1-RELATED"/>
    <property type="match status" value="1"/>
</dbReference>
<dbReference type="PANTHER" id="PTHR28259:SF18">
    <property type="entry name" value="FLUORIDE-SPECIFIC ION CHANNEL FLUC"/>
    <property type="match status" value="1"/>
</dbReference>
<dbReference type="Pfam" id="PF02537">
    <property type="entry name" value="CRCB"/>
    <property type="match status" value="1"/>
</dbReference>
<name>FLUC_XYLFT</name>
<protein>
    <recommendedName>
        <fullName evidence="1">Fluoride-specific ion channel FluC</fullName>
    </recommendedName>
</protein>
<comment type="function">
    <text evidence="1">Fluoride-specific ion channel. Important for reducing fluoride concentration in the cell, thus reducing its toxicity.</text>
</comment>
<comment type="catalytic activity">
    <reaction evidence="1">
        <text>fluoride(in) = fluoride(out)</text>
        <dbReference type="Rhea" id="RHEA:76159"/>
        <dbReference type="ChEBI" id="CHEBI:17051"/>
    </reaction>
    <physiologicalReaction direction="left-to-right" evidence="1">
        <dbReference type="Rhea" id="RHEA:76160"/>
    </physiologicalReaction>
</comment>
<comment type="activity regulation">
    <text evidence="1">Na(+) is not transported, but it plays an essential structural role and its presence is essential for fluoride channel function.</text>
</comment>
<comment type="subcellular location">
    <subcellularLocation>
        <location evidence="1">Cell inner membrane</location>
        <topology evidence="1">Multi-pass membrane protein</topology>
    </subcellularLocation>
</comment>
<comment type="similarity">
    <text evidence="1">Belongs to the fluoride channel Fluc/FEX (TC 1.A.43) family.</text>
</comment>
<reference key="1">
    <citation type="journal article" date="2003" name="J. Bacteriol.">
        <title>Comparative analyses of the complete genome sequences of Pierce's disease and citrus variegated chlorosis strains of Xylella fastidiosa.</title>
        <authorList>
            <person name="Van Sluys M.A."/>
            <person name="de Oliveira M.C."/>
            <person name="Monteiro-Vitorello C.B."/>
            <person name="Miyaki C.Y."/>
            <person name="Furlan L.R."/>
            <person name="Camargo L.E.A."/>
            <person name="da Silva A.C.R."/>
            <person name="Moon D.H."/>
            <person name="Takita M.A."/>
            <person name="Lemos E.G.M."/>
            <person name="Machado M.A."/>
            <person name="Ferro M.I.T."/>
            <person name="da Silva F.R."/>
            <person name="Goldman M.H.S."/>
            <person name="Goldman G.H."/>
            <person name="Lemos M.V.F."/>
            <person name="El-Dorry H."/>
            <person name="Tsai S.M."/>
            <person name="Carrer H."/>
            <person name="Carraro D.M."/>
            <person name="de Oliveira R.C."/>
            <person name="Nunes L.R."/>
            <person name="Siqueira W.J."/>
            <person name="Coutinho L.L."/>
            <person name="Kimura E.T."/>
            <person name="Ferro E.S."/>
            <person name="Harakava R."/>
            <person name="Kuramae E.E."/>
            <person name="Marino C.L."/>
            <person name="Giglioti E."/>
            <person name="Abreu I.L."/>
            <person name="Alves L.M.C."/>
            <person name="do Amaral A.M."/>
            <person name="Baia G.S."/>
            <person name="Blanco S.R."/>
            <person name="Brito M.S."/>
            <person name="Cannavan F.S."/>
            <person name="Celestino A.V."/>
            <person name="da Cunha A.F."/>
            <person name="Fenille R.C."/>
            <person name="Ferro J.A."/>
            <person name="Formighieri E.F."/>
            <person name="Kishi L.T."/>
            <person name="Leoni S.G."/>
            <person name="Oliveira A.R."/>
            <person name="Rosa V.E. Jr."/>
            <person name="Sassaki F.T."/>
            <person name="Sena J.A.D."/>
            <person name="de Souza A.A."/>
            <person name="Truffi D."/>
            <person name="Tsukumo F."/>
            <person name="Yanai G.M."/>
            <person name="Zaros L.G."/>
            <person name="Civerolo E.L."/>
            <person name="Simpson A.J.G."/>
            <person name="Almeida N.F. Jr."/>
            <person name="Setubal J.C."/>
            <person name="Kitajima J.P."/>
        </authorList>
    </citation>
    <scope>NUCLEOTIDE SEQUENCE [LARGE SCALE GENOMIC DNA]</scope>
    <source>
        <strain>Temecula1 / ATCC 700964</strain>
    </source>
</reference>
<gene>
    <name evidence="1" type="primary">fluC</name>
    <name evidence="1" type="synonym">crcB</name>
    <name type="ordered locus">PD_0674</name>
</gene>
<sequence>MNAVVWWQSLLLVMLGGAFGSGLRFVIGSCLLQRFGAGFPWGTLAVNLIGSFVAGFLLIWVDKRGSAGWSWRMLLIVGLIGGLTTFSSLMVECLVFVRSERSLIVGFYLCITLLFGLLFVFLGARLGAFVCDD</sequence>
<organism>
    <name type="scientific">Xylella fastidiosa (strain Temecula1 / ATCC 700964)</name>
    <dbReference type="NCBI Taxonomy" id="183190"/>
    <lineage>
        <taxon>Bacteria</taxon>
        <taxon>Pseudomonadati</taxon>
        <taxon>Pseudomonadota</taxon>
        <taxon>Gammaproteobacteria</taxon>
        <taxon>Lysobacterales</taxon>
        <taxon>Lysobacteraceae</taxon>
        <taxon>Xylella</taxon>
    </lineage>
</organism>
<evidence type="ECO:0000255" key="1">
    <source>
        <dbReference type="HAMAP-Rule" id="MF_00454"/>
    </source>
</evidence>